<protein>
    <recommendedName>
        <fullName evidence="1">Photosystem II protein D1</fullName>
        <shortName evidence="1">PSII D1 protein</shortName>
        <ecNumber evidence="1">1.10.3.9</ecNumber>
    </recommendedName>
    <alternativeName>
        <fullName evidence="1">Photosystem II Q(B) protein</fullName>
    </alternativeName>
</protein>
<accession>A2BUK1</accession>
<organism>
    <name type="scientific">Prochlorococcus marinus (strain MIT 9515)</name>
    <dbReference type="NCBI Taxonomy" id="167542"/>
    <lineage>
        <taxon>Bacteria</taxon>
        <taxon>Bacillati</taxon>
        <taxon>Cyanobacteriota</taxon>
        <taxon>Cyanophyceae</taxon>
        <taxon>Synechococcales</taxon>
        <taxon>Prochlorococcaceae</taxon>
        <taxon>Prochlorococcus</taxon>
    </lineage>
</organism>
<name>PSBA_PROM5</name>
<reference key="1">
    <citation type="journal article" date="2007" name="PLoS Genet.">
        <title>Patterns and implications of gene gain and loss in the evolution of Prochlorococcus.</title>
        <authorList>
            <person name="Kettler G.C."/>
            <person name="Martiny A.C."/>
            <person name="Huang K."/>
            <person name="Zucker J."/>
            <person name="Coleman M.L."/>
            <person name="Rodrigue S."/>
            <person name="Chen F."/>
            <person name="Lapidus A."/>
            <person name="Ferriera S."/>
            <person name="Johnson J."/>
            <person name="Steglich C."/>
            <person name="Church G.M."/>
            <person name="Richardson P."/>
            <person name="Chisholm S.W."/>
        </authorList>
    </citation>
    <scope>NUCLEOTIDE SEQUENCE [LARGE SCALE GENOMIC DNA]</scope>
    <source>
        <strain>MIT 9515</strain>
    </source>
</reference>
<keyword id="KW-0106">Calcium</keyword>
<keyword id="KW-0148">Chlorophyll</keyword>
<keyword id="KW-0157">Chromophore</keyword>
<keyword id="KW-0249">Electron transport</keyword>
<keyword id="KW-0359">Herbicide resistance</keyword>
<keyword id="KW-0408">Iron</keyword>
<keyword id="KW-0460">Magnesium</keyword>
<keyword id="KW-0464">Manganese</keyword>
<keyword id="KW-0472">Membrane</keyword>
<keyword id="KW-0479">Metal-binding</keyword>
<keyword id="KW-0560">Oxidoreductase</keyword>
<keyword id="KW-0602">Photosynthesis</keyword>
<keyword id="KW-0604">Photosystem II</keyword>
<keyword id="KW-0793">Thylakoid</keyword>
<keyword id="KW-0812">Transmembrane</keyword>
<keyword id="KW-1133">Transmembrane helix</keyword>
<keyword id="KW-0813">Transport</keyword>
<comment type="function">
    <text evidence="1">Photosystem II (PSII) is a light-driven water:plastoquinone oxidoreductase that uses light energy to abstract electrons from H(2)O, generating O(2) and a proton gradient subsequently used for ATP formation. It consists of a core antenna complex that captures photons, and an electron transfer chain that converts photonic excitation into a charge separation. The D1/D2 (PsbA/PsbD) reaction center heterodimer binds P680, the primary electron donor of PSII as well as several subsequent electron acceptors.</text>
</comment>
<comment type="catalytic activity">
    <reaction evidence="1">
        <text>2 a plastoquinone + 4 hnu + 2 H2O = 2 a plastoquinol + O2</text>
        <dbReference type="Rhea" id="RHEA:36359"/>
        <dbReference type="Rhea" id="RHEA-COMP:9561"/>
        <dbReference type="Rhea" id="RHEA-COMP:9562"/>
        <dbReference type="ChEBI" id="CHEBI:15377"/>
        <dbReference type="ChEBI" id="CHEBI:15379"/>
        <dbReference type="ChEBI" id="CHEBI:17757"/>
        <dbReference type="ChEBI" id="CHEBI:30212"/>
        <dbReference type="ChEBI" id="CHEBI:62192"/>
        <dbReference type="EC" id="1.10.3.9"/>
    </reaction>
</comment>
<comment type="cofactor">
    <text evidence="1">The D1/D2 heterodimer binds P680, chlorophylls that are the primary electron donor of PSII, and subsequent electron acceptors. It shares a non-heme iron and each subunit binds pheophytin, quinone, additional chlorophylls, carotenoids and lipids. D1 provides most of the ligands for the Mn4-Ca-O5 cluster of the oxygen-evolving complex (OEC). There is also a Cl(-1) ion associated with D1 and D2, which is required for oxygen evolution. The PSII complex binds additional chlorophylls, carotenoids and specific lipids.</text>
</comment>
<comment type="subunit">
    <text evidence="2">PSII is composed of 1 copy each of membrane proteins PsbA, PsbB, PsbC, PsbD, PsbE, PsbF, PsbH, PsbI, PsbJ, PsbK, PsbL, PsbM, PsbT, PsbX, PsbY, Psb30/Ycf12, peripheral proteins PsbO, CyanoQ (PsbQ), PsbU, PsbV and a large number of cofactors. It forms dimeric complexes.</text>
</comment>
<comment type="subcellular location">
    <subcellularLocation>
        <location evidence="1">Cellular thylakoid membrane</location>
        <topology evidence="1">Multi-pass membrane protein</topology>
    </subcellularLocation>
</comment>
<comment type="PTM">
    <text evidence="1">Tyr-162 forms a radical intermediate that is referred to as redox-active TyrZ, YZ or Y-Z.</text>
</comment>
<comment type="PTM">
    <text evidence="1">C-terminally processed by CtpA; processing is essential to allow assembly of the oxygen-evolving complex and thus photosynthetic growth.</text>
</comment>
<comment type="miscellaneous">
    <text evidence="1">Cyanobacteria usually contain more than 2 copies of the psbA gene.</text>
</comment>
<comment type="miscellaneous">
    <text evidence="1">2 of the reaction center chlorophylls (ChlD1 and ChlD2) are entirely coordinated by water.</text>
</comment>
<comment type="miscellaneous">
    <text evidence="1">Herbicides such as atrazine, BNT, diuron or ioxynil bind in the Q(B) binding site and block subsequent electron transfer.</text>
</comment>
<comment type="similarity">
    <text evidence="1">Belongs to the reaction center PufL/M/PsbA/D family.</text>
</comment>
<evidence type="ECO:0000255" key="1">
    <source>
        <dbReference type="HAMAP-Rule" id="MF_01379"/>
    </source>
</evidence>
<evidence type="ECO:0000305" key="2"/>
<sequence length="360" mass="39636">MTTIQQQRTSLLKGWPQFCEWVTSTNNRIYVGWFGVLMIPCLLAAAACFIVAFIAAPPVDIDGIREPVAGSFLYGNNIISGAVVPSSNAIGLHFYPIWEAATVDEWLYNGGPYQLVIFHFLIGISAYMGRQWELSYRLGMRPWICVAYSAPVSAAFAVFLVYPFGQGSFSDGMPLGISGTFNFMFVFQAEHNILMHPFHMAGVAGMFGGSLFSAMHGSLVTSSLIRETTETESQNYGYKFGQEEETYNIVAAHGYFGRLIFQYASFNNSRSLHFFLAVFPVVCVWLTSMGICTMAFNLNGFNFNQSVVDANGKIVPTWGDVLNRANLGMEVMHERNAHNFPLDLAAAESTTVALTAPAIG</sequence>
<dbReference type="EC" id="1.10.3.9" evidence="1"/>
<dbReference type="EMBL" id="CP000552">
    <property type="protein sequence ID" value="ABM71462.1"/>
    <property type="molecule type" value="Genomic_DNA"/>
</dbReference>
<dbReference type="EMBL" id="CP000552">
    <property type="protein sequence ID" value="ABM71464.1"/>
    <property type="molecule type" value="Genomic_DNA"/>
</dbReference>
<dbReference type="SMR" id="A2BUK1"/>
<dbReference type="STRING" id="167542.P9515_02531"/>
<dbReference type="GeneID" id="60202008"/>
<dbReference type="KEGG" id="pmc:P9515_02531"/>
<dbReference type="KEGG" id="pmc:P9515_02551"/>
<dbReference type="eggNOG" id="ENOG502Z87P">
    <property type="taxonomic scope" value="Bacteria"/>
</dbReference>
<dbReference type="HOGENOM" id="CLU_054206_1_0_3"/>
<dbReference type="OrthoDB" id="505356at2"/>
<dbReference type="Proteomes" id="UP000001589">
    <property type="component" value="Chromosome"/>
</dbReference>
<dbReference type="GO" id="GO:0009523">
    <property type="term" value="C:photosystem II"/>
    <property type="evidence" value="ECO:0007669"/>
    <property type="project" value="UniProtKB-KW"/>
</dbReference>
<dbReference type="GO" id="GO:0031676">
    <property type="term" value="C:plasma membrane-derived thylakoid membrane"/>
    <property type="evidence" value="ECO:0007669"/>
    <property type="project" value="UniProtKB-SubCell"/>
</dbReference>
<dbReference type="GO" id="GO:0016168">
    <property type="term" value="F:chlorophyll binding"/>
    <property type="evidence" value="ECO:0007669"/>
    <property type="project" value="UniProtKB-UniRule"/>
</dbReference>
<dbReference type="GO" id="GO:0045156">
    <property type="term" value="F:electron transporter, transferring electrons within the cyclic electron transport pathway of photosynthesis activity"/>
    <property type="evidence" value="ECO:0007669"/>
    <property type="project" value="InterPro"/>
</dbReference>
<dbReference type="GO" id="GO:0005506">
    <property type="term" value="F:iron ion binding"/>
    <property type="evidence" value="ECO:0007669"/>
    <property type="project" value="UniProtKB-UniRule"/>
</dbReference>
<dbReference type="GO" id="GO:0016682">
    <property type="term" value="F:oxidoreductase activity, acting on diphenols and related substances as donors, oxygen as acceptor"/>
    <property type="evidence" value="ECO:0007669"/>
    <property type="project" value="UniProtKB-UniRule"/>
</dbReference>
<dbReference type="GO" id="GO:0010242">
    <property type="term" value="F:oxygen evolving activity"/>
    <property type="evidence" value="ECO:0007669"/>
    <property type="project" value="UniProtKB-EC"/>
</dbReference>
<dbReference type="GO" id="GO:0009772">
    <property type="term" value="P:photosynthetic electron transport in photosystem II"/>
    <property type="evidence" value="ECO:0007669"/>
    <property type="project" value="InterPro"/>
</dbReference>
<dbReference type="GO" id="GO:0009635">
    <property type="term" value="P:response to herbicide"/>
    <property type="evidence" value="ECO:0007669"/>
    <property type="project" value="UniProtKB-KW"/>
</dbReference>
<dbReference type="FunFam" id="1.20.85.10:FF:000002">
    <property type="entry name" value="Photosystem II protein D1"/>
    <property type="match status" value="1"/>
</dbReference>
<dbReference type="Gene3D" id="1.20.85.10">
    <property type="entry name" value="Photosystem II protein D1-like"/>
    <property type="match status" value="1"/>
</dbReference>
<dbReference type="HAMAP" id="MF_01379">
    <property type="entry name" value="PSII_PsbA_D1"/>
    <property type="match status" value="1"/>
</dbReference>
<dbReference type="InterPro" id="IPR055266">
    <property type="entry name" value="D1/D2"/>
</dbReference>
<dbReference type="InterPro" id="IPR036854">
    <property type="entry name" value="Photo_II_D1/D2_sf"/>
</dbReference>
<dbReference type="InterPro" id="IPR000484">
    <property type="entry name" value="Photo_RC_L/M"/>
</dbReference>
<dbReference type="InterPro" id="IPR055265">
    <property type="entry name" value="Photo_RC_L/M_CS"/>
</dbReference>
<dbReference type="InterPro" id="IPR005867">
    <property type="entry name" value="PSII_D1"/>
</dbReference>
<dbReference type="NCBIfam" id="TIGR01151">
    <property type="entry name" value="psbA"/>
    <property type="match status" value="1"/>
</dbReference>
<dbReference type="PANTHER" id="PTHR33149:SF12">
    <property type="entry name" value="PHOTOSYSTEM II D2 PROTEIN"/>
    <property type="match status" value="1"/>
</dbReference>
<dbReference type="PANTHER" id="PTHR33149">
    <property type="entry name" value="PHOTOSYSTEM II PROTEIN D1"/>
    <property type="match status" value="1"/>
</dbReference>
<dbReference type="Pfam" id="PF00124">
    <property type="entry name" value="Photo_RC"/>
    <property type="match status" value="1"/>
</dbReference>
<dbReference type="PRINTS" id="PR00256">
    <property type="entry name" value="REACTNCENTRE"/>
</dbReference>
<dbReference type="SUPFAM" id="SSF81483">
    <property type="entry name" value="Bacterial photosystem II reaction centre, L and M subunits"/>
    <property type="match status" value="1"/>
</dbReference>
<dbReference type="PROSITE" id="PS00244">
    <property type="entry name" value="REACTION_CENTER"/>
    <property type="match status" value="1"/>
</dbReference>
<feature type="chain" id="PRO_0000316365" description="Photosystem II protein D1" evidence="1">
    <location>
        <begin position="1"/>
        <end position="345"/>
    </location>
</feature>
<feature type="propeptide" id="PRO_0000316366" evidence="1">
    <location>
        <begin position="346"/>
        <end position="360"/>
    </location>
</feature>
<feature type="transmembrane region" description="Helical" evidence="1">
    <location>
        <begin position="30"/>
        <end position="47"/>
    </location>
</feature>
<feature type="transmembrane region" description="Helical" evidence="1">
    <location>
        <begin position="119"/>
        <end position="134"/>
    </location>
</feature>
<feature type="transmembrane region" description="Helical" evidence="1">
    <location>
        <begin position="143"/>
        <end position="157"/>
    </location>
</feature>
<feature type="transmembrane region" description="Helical" evidence="1">
    <location>
        <begin position="198"/>
        <end position="219"/>
    </location>
</feature>
<feature type="transmembrane region" description="Helical" evidence="1">
    <location>
        <begin position="275"/>
        <end position="289"/>
    </location>
</feature>
<feature type="binding site" description="axial binding residue" evidence="1">
    <location>
        <position position="119"/>
    </location>
    <ligand>
        <name>chlorophyll a</name>
        <dbReference type="ChEBI" id="CHEBI:58416"/>
        <label>ChlzD1</label>
    </ligand>
    <ligandPart>
        <name>Mg</name>
        <dbReference type="ChEBI" id="CHEBI:25107"/>
    </ligandPart>
</feature>
<feature type="binding site" evidence="1">
    <location>
        <position position="127"/>
    </location>
    <ligand>
        <name>pheophytin a</name>
        <dbReference type="ChEBI" id="CHEBI:136840"/>
        <label>D1</label>
    </ligand>
</feature>
<feature type="binding site" evidence="1">
    <location>
        <position position="171"/>
    </location>
    <ligand>
        <name>[CaMn4O5] cluster</name>
        <dbReference type="ChEBI" id="CHEBI:189552"/>
    </ligand>
</feature>
<feature type="binding site" evidence="1">
    <location>
        <position position="190"/>
    </location>
    <ligand>
        <name>[CaMn4O5] cluster</name>
        <dbReference type="ChEBI" id="CHEBI:189552"/>
    </ligand>
</feature>
<feature type="binding site" description="axial binding residue" evidence="1">
    <location>
        <position position="199"/>
    </location>
    <ligand>
        <name>chlorophyll a</name>
        <dbReference type="ChEBI" id="CHEBI:58416"/>
        <label>PD1</label>
    </ligand>
    <ligandPart>
        <name>Mg</name>
        <dbReference type="ChEBI" id="CHEBI:25107"/>
    </ligandPart>
</feature>
<feature type="binding site" evidence="1">
    <location>
        <position position="216"/>
    </location>
    <ligand>
        <name>a quinone</name>
        <dbReference type="ChEBI" id="CHEBI:132124"/>
        <label>B</label>
    </ligand>
</feature>
<feature type="binding site" evidence="1">
    <location>
        <position position="216"/>
    </location>
    <ligand>
        <name>Fe cation</name>
        <dbReference type="ChEBI" id="CHEBI:24875"/>
        <note>ligand shared with heterodimeric partner</note>
    </ligand>
</feature>
<feature type="binding site" evidence="1">
    <location>
        <begin position="265"/>
        <end position="266"/>
    </location>
    <ligand>
        <name>a quinone</name>
        <dbReference type="ChEBI" id="CHEBI:132124"/>
        <label>B</label>
    </ligand>
</feature>
<feature type="binding site" evidence="1">
    <location>
        <position position="273"/>
    </location>
    <ligand>
        <name>Fe cation</name>
        <dbReference type="ChEBI" id="CHEBI:24875"/>
        <note>ligand shared with heterodimeric partner</note>
    </ligand>
</feature>
<feature type="binding site" evidence="1">
    <location>
        <position position="333"/>
    </location>
    <ligand>
        <name>[CaMn4O5] cluster</name>
        <dbReference type="ChEBI" id="CHEBI:189552"/>
    </ligand>
</feature>
<feature type="binding site" evidence="1">
    <location>
        <position position="334"/>
    </location>
    <ligand>
        <name>[CaMn4O5] cluster</name>
        <dbReference type="ChEBI" id="CHEBI:189552"/>
    </ligand>
</feature>
<feature type="binding site" evidence="1">
    <location>
        <position position="343"/>
    </location>
    <ligand>
        <name>[CaMn4O5] cluster</name>
        <dbReference type="ChEBI" id="CHEBI:189552"/>
    </ligand>
</feature>
<feature type="binding site" evidence="1">
    <location>
        <position position="345"/>
    </location>
    <ligand>
        <name>[CaMn4O5] cluster</name>
        <dbReference type="ChEBI" id="CHEBI:189552"/>
    </ligand>
</feature>
<feature type="site" description="Tyrosine radical intermediate" evidence="1">
    <location>
        <position position="162"/>
    </location>
</feature>
<feature type="site" description="Stabilizes free radical intermediate" evidence="1">
    <location>
        <position position="191"/>
    </location>
</feature>
<feature type="site" description="Cleavage; by CtpA" evidence="1">
    <location>
        <begin position="345"/>
        <end position="346"/>
    </location>
</feature>
<proteinExistence type="inferred from homology"/>
<gene>
    <name evidence="1 2" type="primary">psbA1</name>
    <name type="ordered locus">P9515_02531</name>
</gene>
<gene>
    <name evidence="1 2" type="primary">psbA2</name>
    <name type="ordered locus">P9515_02551</name>
</gene>